<proteinExistence type="inferred from homology"/>
<accession>O36017</accession>
<comment type="function">
    <text evidence="1">Catalyzes the transfer of endogenously produced octanoic acid from octanoyl-acyl-carrier-protein onto the lipoyl domains of lipoate-dependent enzymes. Lipoyl-ACP can also act as a substrate although octanoyl-ACP is likely to be the physiological substrate (By similarity).</text>
</comment>
<comment type="catalytic activity">
    <reaction>
        <text>octanoyl-[ACP] + L-lysyl-[protein] = N(6)-octanoyl-L-lysyl-[protein] + holo-[ACP] + H(+)</text>
        <dbReference type="Rhea" id="RHEA:17665"/>
        <dbReference type="Rhea" id="RHEA-COMP:9636"/>
        <dbReference type="Rhea" id="RHEA-COMP:9685"/>
        <dbReference type="Rhea" id="RHEA-COMP:9752"/>
        <dbReference type="Rhea" id="RHEA-COMP:9928"/>
        <dbReference type="ChEBI" id="CHEBI:15378"/>
        <dbReference type="ChEBI" id="CHEBI:29969"/>
        <dbReference type="ChEBI" id="CHEBI:64479"/>
        <dbReference type="ChEBI" id="CHEBI:78463"/>
        <dbReference type="ChEBI" id="CHEBI:78809"/>
        <dbReference type="EC" id="2.3.1.181"/>
    </reaction>
</comment>
<comment type="pathway">
    <text>Protein modification; protein lipoylation via endogenous pathway; protein N(6)-(lipoyl)lysine from octanoyl-[acyl-carrier-protein]: step 1/2.</text>
</comment>
<comment type="miscellaneous">
    <text evidence="1">In the reaction, the free carboxyl group of octanoic acid is attached via an amide linkage to the epsilon-amino group of a specific lysine residue of lipoyl domains of lipoate-dependent enzymes.</text>
</comment>
<comment type="similarity">
    <text evidence="3">Belongs to the LipB family.</text>
</comment>
<organism>
    <name type="scientific">Schizosaccharomyces pombe (strain 972 / ATCC 24843)</name>
    <name type="common">Fission yeast</name>
    <dbReference type="NCBI Taxonomy" id="284812"/>
    <lineage>
        <taxon>Eukaryota</taxon>
        <taxon>Fungi</taxon>
        <taxon>Dikarya</taxon>
        <taxon>Ascomycota</taxon>
        <taxon>Taphrinomycotina</taxon>
        <taxon>Schizosaccharomycetes</taxon>
        <taxon>Schizosaccharomycetales</taxon>
        <taxon>Schizosaccharomycetaceae</taxon>
        <taxon>Schizosaccharomyces</taxon>
    </lineage>
</organism>
<dbReference type="EC" id="2.3.1.181"/>
<dbReference type="EMBL" id="CU329670">
    <property type="protein sequence ID" value="CAB11708.1"/>
    <property type="molecule type" value="Genomic_DNA"/>
</dbReference>
<dbReference type="PIR" id="T38809">
    <property type="entry name" value="T38809"/>
</dbReference>
<dbReference type="SMR" id="O36017"/>
<dbReference type="BioGRID" id="280054">
    <property type="interactions" value="3"/>
</dbReference>
<dbReference type="FunCoup" id="O36017">
    <property type="interactions" value="637"/>
</dbReference>
<dbReference type="STRING" id="284812.O36017"/>
<dbReference type="PaxDb" id="4896-SPAC4F10.05c.1"/>
<dbReference type="EnsemblFungi" id="SPAC4F10.05c.1">
    <property type="protein sequence ID" value="SPAC4F10.05c.1:pep"/>
    <property type="gene ID" value="SPAC4F10.05c"/>
</dbReference>
<dbReference type="KEGG" id="spo:2543640"/>
<dbReference type="PomBase" id="SPAC4F10.05c"/>
<dbReference type="VEuPathDB" id="FungiDB:SPAC4F10.05c"/>
<dbReference type="eggNOG" id="KOG0325">
    <property type="taxonomic scope" value="Eukaryota"/>
</dbReference>
<dbReference type="HOGENOM" id="CLU_035168_0_1_1"/>
<dbReference type="InParanoid" id="O36017"/>
<dbReference type="OMA" id="QHISFLT"/>
<dbReference type="PhylomeDB" id="O36017"/>
<dbReference type="Reactome" id="R-SPO-9857492">
    <property type="pathway name" value="Protein lipoylation"/>
</dbReference>
<dbReference type="UniPathway" id="UPA00538">
    <property type="reaction ID" value="UER00592"/>
</dbReference>
<dbReference type="PRO" id="PR:O36017"/>
<dbReference type="Proteomes" id="UP000002485">
    <property type="component" value="Chromosome I"/>
</dbReference>
<dbReference type="GO" id="GO:0005737">
    <property type="term" value="C:cytoplasm"/>
    <property type="evidence" value="ECO:0007005"/>
    <property type="project" value="PomBase"/>
</dbReference>
<dbReference type="GO" id="GO:0005739">
    <property type="term" value="C:mitochondrion"/>
    <property type="evidence" value="ECO:0000318"/>
    <property type="project" value="GO_Central"/>
</dbReference>
<dbReference type="GO" id="GO:0033819">
    <property type="term" value="F:lipoyl(octanoyl) transferase activity"/>
    <property type="evidence" value="ECO:0000318"/>
    <property type="project" value="GO_Central"/>
</dbReference>
<dbReference type="GO" id="GO:0006546">
    <property type="term" value="P:glycine catabolic process"/>
    <property type="evidence" value="ECO:0000303"/>
    <property type="project" value="PomBase"/>
</dbReference>
<dbReference type="GO" id="GO:0009107">
    <property type="term" value="P:lipoate biosynthetic process"/>
    <property type="evidence" value="ECO:0000305"/>
    <property type="project" value="PomBase"/>
</dbReference>
<dbReference type="GO" id="GO:0036211">
    <property type="term" value="P:protein modification process"/>
    <property type="evidence" value="ECO:0007669"/>
    <property type="project" value="InterPro"/>
</dbReference>
<dbReference type="CDD" id="cd16444">
    <property type="entry name" value="LipB"/>
    <property type="match status" value="1"/>
</dbReference>
<dbReference type="FunFam" id="3.30.930.10:FF:000108">
    <property type="entry name" value="Octanoyltransferase"/>
    <property type="match status" value="1"/>
</dbReference>
<dbReference type="Gene3D" id="3.30.930.10">
    <property type="entry name" value="Bira Bifunctional Protein, Domain 2"/>
    <property type="match status" value="1"/>
</dbReference>
<dbReference type="InterPro" id="IPR045864">
    <property type="entry name" value="aa-tRNA-synth_II/BPL/LPL"/>
</dbReference>
<dbReference type="InterPro" id="IPR004143">
    <property type="entry name" value="BPL_LPL_catalytic"/>
</dbReference>
<dbReference type="InterPro" id="IPR000544">
    <property type="entry name" value="Octanoyltransferase"/>
</dbReference>
<dbReference type="InterPro" id="IPR020605">
    <property type="entry name" value="Octanoyltransferase_CS"/>
</dbReference>
<dbReference type="NCBIfam" id="TIGR00214">
    <property type="entry name" value="lipB"/>
    <property type="match status" value="1"/>
</dbReference>
<dbReference type="PANTHER" id="PTHR10993:SF7">
    <property type="entry name" value="LIPOYLTRANSFERASE 2, MITOCHONDRIAL-RELATED"/>
    <property type="match status" value="1"/>
</dbReference>
<dbReference type="PANTHER" id="PTHR10993">
    <property type="entry name" value="OCTANOYLTRANSFERASE"/>
    <property type="match status" value="1"/>
</dbReference>
<dbReference type="Pfam" id="PF21948">
    <property type="entry name" value="LplA-B_cat"/>
    <property type="match status" value="1"/>
</dbReference>
<dbReference type="PIRSF" id="PIRSF016262">
    <property type="entry name" value="LPLase"/>
    <property type="match status" value="1"/>
</dbReference>
<dbReference type="SUPFAM" id="SSF55681">
    <property type="entry name" value="Class II aaRS and biotin synthetases"/>
    <property type="match status" value="1"/>
</dbReference>
<dbReference type="PROSITE" id="PS51733">
    <property type="entry name" value="BPL_LPL_CATALYTIC"/>
    <property type="match status" value="1"/>
</dbReference>
<dbReference type="PROSITE" id="PS01313">
    <property type="entry name" value="LIPB"/>
    <property type="match status" value="1"/>
</dbReference>
<protein>
    <recommendedName>
        <fullName>Probable octanoyltransferase</fullName>
        <ecNumber>2.3.1.181</ecNumber>
    </recommendedName>
    <alternativeName>
        <fullName>Lipoate biosynthesis protein</fullName>
    </alternativeName>
    <alternativeName>
        <fullName>Lipoate-protein ligase</fullName>
    </alternativeName>
    <alternativeName>
        <fullName>Lipoyl ligase</fullName>
    </alternativeName>
    <alternativeName>
        <fullName>Lipoyl/octanoyl transferase</fullName>
    </alternativeName>
    <alternativeName>
        <fullName>Octanoyl-[acyl-carrier-protein]-protein N-octanoyltransferase</fullName>
    </alternativeName>
</protein>
<reference key="1">
    <citation type="journal article" date="2002" name="Nature">
        <title>The genome sequence of Schizosaccharomyces pombe.</title>
        <authorList>
            <person name="Wood V."/>
            <person name="Gwilliam R."/>
            <person name="Rajandream M.A."/>
            <person name="Lyne M.H."/>
            <person name="Lyne R."/>
            <person name="Stewart A."/>
            <person name="Sgouros J.G."/>
            <person name="Peat N."/>
            <person name="Hayles J."/>
            <person name="Baker S.G."/>
            <person name="Basham D."/>
            <person name="Bowman S."/>
            <person name="Brooks K."/>
            <person name="Brown D."/>
            <person name="Brown S."/>
            <person name="Chillingworth T."/>
            <person name="Churcher C.M."/>
            <person name="Collins M."/>
            <person name="Connor R."/>
            <person name="Cronin A."/>
            <person name="Davis P."/>
            <person name="Feltwell T."/>
            <person name="Fraser A."/>
            <person name="Gentles S."/>
            <person name="Goble A."/>
            <person name="Hamlin N."/>
            <person name="Harris D.E."/>
            <person name="Hidalgo J."/>
            <person name="Hodgson G."/>
            <person name="Holroyd S."/>
            <person name="Hornsby T."/>
            <person name="Howarth S."/>
            <person name="Huckle E.J."/>
            <person name="Hunt S."/>
            <person name="Jagels K."/>
            <person name="James K.D."/>
            <person name="Jones L."/>
            <person name="Jones M."/>
            <person name="Leather S."/>
            <person name="McDonald S."/>
            <person name="McLean J."/>
            <person name="Mooney P."/>
            <person name="Moule S."/>
            <person name="Mungall K.L."/>
            <person name="Murphy L.D."/>
            <person name="Niblett D."/>
            <person name="Odell C."/>
            <person name="Oliver K."/>
            <person name="O'Neil S."/>
            <person name="Pearson D."/>
            <person name="Quail M.A."/>
            <person name="Rabbinowitsch E."/>
            <person name="Rutherford K.M."/>
            <person name="Rutter S."/>
            <person name="Saunders D."/>
            <person name="Seeger K."/>
            <person name="Sharp S."/>
            <person name="Skelton J."/>
            <person name="Simmonds M.N."/>
            <person name="Squares R."/>
            <person name="Squares S."/>
            <person name="Stevens K."/>
            <person name="Taylor K."/>
            <person name="Taylor R.G."/>
            <person name="Tivey A."/>
            <person name="Walsh S.V."/>
            <person name="Warren T."/>
            <person name="Whitehead S."/>
            <person name="Woodward J.R."/>
            <person name="Volckaert G."/>
            <person name="Aert R."/>
            <person name="Robben J."/>
            <person name="Grymonprez B."/>
            <person name="Weltjens I."/>
            <person name="Vanstreels E."/>
            <person name="Rieger M."/>
            <person name="Schaefer M."/>
            <person name="Mueller-Auer S."/>
            <person name="Gabel C."/>
            <person name="Fuchs M."/>
            <person name="Duesterhoeft A."/>
            <person name="Fritzc C."/>
            <person name="Holzer E."/>
            <person name="Moestl D."/>
            <person name="Hilbert H."/>
            <person name="Borzym K."/>
            <person name="Langer I."/>
            <person name="Beck A."/>
            <person name="Lehrach H."/>
            <person name="Reinhardt R."/>
            <person name="Pohl T.M."/>
            <person name="Eger P."/>
            <person name="Zimmermann W."/>
            <person name="Wedler H."/>
            <person name="Wambutt R."/>
            <person name="Purnelle B."/>
            <person name="Goffeau A."/>
            <person name="Cadieu E."/>
            <person name="Dreano S."/>
            <person name="Gloux S."/>
            <person name="Lelaure V."/>
            <person name="Mottier S."/>
            <person name="Galibert F."/>
            <person name="Aves S.J."/>
            <person name="Xiang Z."/>
            <person name="Hunt C."/>
            <person name="Moore K."/>
            <person name="Hurst S.M."/>
            <person name="Lucas M."/>
            <person name="Rochet M."/>
            <person name="Gaillardin C."/>
            <person name="Tallada V.A."/>
            <person name="Garzon A."/>
            <person name="Thode G."/>
            <person name="Daga R.R."/>
            <person name="Cruzado L."/>
            <person name="Jimenez J."/>
            <person name="Sanchez M."/>
            <person name="del Rey F."/>
            <person name="Benito J."/>
            <person name="Dominguez A."/>
            <person name="Revuelta J.L."/>
            <person name="Moreno S."/>
            <person name="Armstrong J."/>
            <person name="Forsburg S.L."/>
            <person name="Cerutti L."/>
            <person name="Lowe T."/>
            <person name="McCombie W.R."/>
            <person name="Paulsen I."/>
            <person name="Potashkin J."/>
            <person name="Shpakovski G.V."/>
            <person name="Ussery D."/>
            <person name="Barrell B.G."/>
            <person name="Nurse P."/>
        </authorList>
    </citation>
    <scope>NUCLEOTIDE SEQUENCE [LARGE SCALE GENOMIC DNA]</scope>
    <source>
        <strain>972 / ATCC 24843</strain>
    </source>
</reference>
<gene>
    <name type="ORF">SPAC4F10.05c</name>
</gene>
<feature type="chain" id="PRO_0000062908" description="Probable octanoyltransferase">
    <location>
        <begin position="1"/>
        <end position="219"/>
    </location>
</feature>
<feature type="domain" description="BPL/LPL catalytic" evidence="2">
    <location>
        <begin position="43"/>
        <end position="219"/>
    </location>
</feature>
<feature type="active site" description="Acyl-thioester intermediate" evidence="1">
    <location>
        <position position="182"/>
    </location>
</feature>
<feature type="binding site" evidence="1">
    <location>
        <begin position="83"/>
        <end position="90"/>
    </location>
    <ligand>
        <name>substrate</name>
    </ligand>
</feature>
<feature type="binding site" evidence="1">
    <location>
        <begin position="151"/>
        <end position="153"/>
    </location>
    <ligand>
        <name>substrate</name>
    </ligand>
</feature>
<feature type="binding site" evidence="1">
    <location>
        <begin position="164"/>
        <end position="166"/>
    </location>
    <ligand>
        <name>substrate</name>
    </ligand>
</feature>
<feature type="site" description="Lowers pKa of active site Cys" evidence="1">
    <location>
        <position position="148"/>
    </location>
</feature>
<keyword id="KW-0012">Acyltransferase</keyword>
<keyword id="KW-1185">Reference proteome</keyword>
<keyword id="KW-0808">Transferase</keyword>
<name>LIPB_SCHPO</name>
<sequence length="219" mass="24497">MNKIQHISFITKKNPLVSYERVGALQNRFVQHYLNYKANKVEQPPKPTIITSQVCPVYTLGRRESSINFTKGFPKAKVVKALRGGQTTFHGPGQILAYPIIDLKSFGLSPREYVSRLEQAIIATCKSFGIEKAHTTKNTGVWVTENDKIAAIGIHLRRNITSHGLALNVSTDLKYFNYIVGCGLYGKNTTSFKDQGVFTDLKSVEKVLVNNLDSFLMSK</sequence>
<evidence type="ECO:0000250" key="1"/>
<evidence type="ECO:0000255" key="2">
    <source>
        <dbReference type="PROSITE-ProRule" id="PRU01067"/>
    </source>
</evidence>
<evidence type="ECO:0000305" key="3"/>